<feature type="chain" id="PRO_1000058786" description="Adenylate kinase">
    <location>
        <begin position="1"/>
        <end position="189"/>
    </location>
</feature>
<feature type="region of interest" description="NMP" evidence="1">
    <location>
        <begin position="31"/>
        <end position="60"/>
    </location>
</feature>
<feature type="region of interest" description="LID" evidence="1">
    <location>
        <begin position="127"/>
        <end position="137"/>
    </location>
</feature>
<feature type="binding site" evidence="1">
    <location>
        <begin position="11"/>
        <end position="16"/>
    </location>
    <ligand>
        <name>ATP</name>
        <dbReference type="ChEBI" id="CHEBI:30616"/>
    </ligand>
</feature>
<feature type="binding site" evidence="1">
    <location>
        <position position="32"/>
    </location>
    <ligand>
        <name>AMP</name>
        <dbReference type="ChEBI" id="CHEBI:456215"/>
    </ligand>
</feature>
<feature type="binding site" evidence="1">
    <location>
        <position position="37"/>
    </location>
    <ligand>
        <name>AMP</name>
        <dbReference type="ChEBI" id="CHEBI:456215"/>
    </ligand>
</feature>
<feature type="binding site" evidence="1">
    <location>
        <begin position="58"/>
        <end position="60"/>
    </location>
    <ligand>
        <name>AMP</name>
        <dbReference type="ChEBI" id="CHEBI:456215"/>
    </ligand>
</feature>
<feature type="binding site" evidence="1">
    <location>
        <begin position="86"/>
        <end position="89"/>
    </location>
    <ligand>
        <name>AMP</name>
        <dbReference type="ChEBI" id="CHEBI:456215"/>
    </ligand>
</feature>
<feature type="binding site" evidence="1">
    <location>
        <position position="93"/>
    </location>
    <ligand>
        <name>AMP</name>
        <dbReference type="ChEBI" id="CHEBI:456215"/>
    </ligand>
</feature>
<feature type="binding site" evidence="1">
    <location>
        <position position="128"/>
    </location>
    <ligand>
        <name>ATP</name>
        <dbReference type="ChEBI" id="CHEBI:30616"/>
    </ligand>
</feature>
<feature type="binding site" evidence="1">
    <location>
        <position position="134"/>
    </location>
    <ligand>
        <name>AMP</name>
        <dbReference type="ChEBI" id="CHEBI:456215"/>
    </ligand>
</feature>
<feature type="binding site" evidence="1">
    <location>
        <position position="145"/>
    </location>
    <ligand>
        <name>AMP</name>
        <dbReference type="ChEBI" id="CHEBI:456215"/>
    </ligand>
</feature>
<feature type="binding site" evidence="1">
    <location>
        <position position="173"/>
    </location>
    <ligand>
        <name>ATP</name>
        <dbReference type="ChEBI" id="CHEBI:30616"/>
    </ligand>
</feature>
<reference key="1">
    <citation type="journal article" date="2007" name="PLoS Biol.">
        <title>Evolution of symbiotic bacteria in the distal human intestine.</title>
        <authorList>
            <person name="Xu J."/>
            <person name="Mahowald M.A."/>
            <person name="Ley R.E."/>
            <person name="Lozupone C.A."/>
            <person name="Hamady M."/>
            <person name="Martens E.C."/>
            <person name="Henrissat B."/>
            <person name="Coutinho P.M."/>
            <person name="Minx P."/>
            <person name="Latreille P."/>
            <person name="Cordum H."/>
            <person name="Van Brunt A."/>
            <person name="Kim K."/>
            <person name="Fulton R.S."/>
            <person name="Fulton L.A."/>
            <person name="Clifton S.W."/>
            <person name="Wilson R.K."/>
            <person name="Knight R.D."/>
            <person name="Gordon J.I."/>
        </authorList>
    </citation>
    <scope>NUCLEOTIDE SEQUENCE [LARGE SCALE GENOMIC DNA]</scope>
    <source>
        <strain>ATCC 8482 / DSM 1447 / JCM 5826 / CCUG 4940 / NBRC 14291 / NCTC 11154</strain>
    </source>
</reference>
<sequence>MLNIVIFGAPGSGKGTQSERIVEKFGINHISTGDVLRAEIKKGTELGKTAKGYIDQGQLLPDELIIDILASTLDSFKESKGVIFDGFPRTIAQAEALKKMLAERGQEVSVMLDLDVPEEELMTRLIKRGQESGRADDNEETIKKRLVVYHSQTAPLIDWYKNEGKYQHIHGLGTMDAIFADIVAAVEKL</sequence>
<name>KAD_PHOV8</name>
<proteinExistence type="inferred from homology"/>
<keyword id="KW-0067">ATP-binding</keyword>
<keyword id="KW-0963">Cytoplasm</keyword>
<keyword id="KW-0418">Kinase</keyword>
<keyword id="KW-0545">Nucleotide biosynthesis</keyword>
<keyword id="KW-0547">Nucleotide-binding</keyword>
<keyword id="KW-0808">Transferase</keyword>
<gene>
    <name evidence="1" type="primary">adk</name>
    <name type="ordered locus">BVU_1682</name>
</gene>
<organism>
    <name type="scientific">Phocaeicola vulgatus (strain ATCC 8482 / DSM 1447 / JCM 5826 / CCUG 4940 / NBRC 14291 / NCTC 11154)</name>
    <name type="common">Bacteroides vulgatus</name>
    <dbReference type="NCBI Taxonomy" id="435590"/>
    <lineage>
        <taxon>Bacteria</taxon>
        <taxon>Pseudomonadati</taxon>
        <taxon>Bacteroidota</taxon>
        <taxon>Bacteroidia</taxon>
        <taxon>Bacteroidales</taxon>
        <taxon>Bacteroidaceae</taxon>
        <taxon>Phocaeicola</taxon>
    </lineage>
</organism>
<protein>
    <recommendedName>
        <fullName evidence="1">Adenylate kinase</fullName>
        <shortName evidence="1">AK</shortName>
        <ecNumber evidence="1">2.7.4.3</ecNumber>
    </recommendedName>
    <alternativeName>
        <fullName evidence="1">ATP-AMP transphosphorylase</fullName>
    </alternativeName>
    <alternativeName>
        <fullName evidence="1">ATP:AMP phosphotransferase</fullName>
    </alternativeName>
    <alternativeName>
        <fullName evidence="1">Adenylate monophosphate kinase</fullName>
    </alternativeName>
</protein>
<accession>A6L0Z9</accession>
<comment type="function">
    <text evidence="1">Catalyzes the reversible transfer of the terminal phosphate group between ATP and AMP. Plays an important role in cellular energy homeostasis and in adenine nucleotide metabolism.</text>
</comment>
<comment type="catalytic activity">
    <reaction evidence="1">
        <text>AMP + ATP = 2 ADP</text>
        <dbReference type="Rhea" id="RHEA:12973"/>
        <dbReference type="ChEBI" id="CHEBI:30616"/>
        <dbReference type="ChEBI" id="CHEBI:456215"/>
        <dbReference type="ChEBI" id="CHEBI:456216"/>
        <dbReference type="EC" id="2.7.4.3"/>
    </reaction>
</comment>
<comment type="pathway">
    <text evidence="1">Purine metabolism; AMP biosynthesis via salvage pathway; AMP from ADP: step 1/1.</text>
</comment>
<comment type="subunit">
    <text evidence="1">Monomer.</text>
</comment>
<comment type="subcellular location">
    <subcellularLocation>
        <location evidence="1">Cytoplasm</location>
    </subcellularLocation>
</comment>
<comment type="domain">
    <text evidence="1">Consists of three domains, a large central CORE domain and two small peripheral domains, NMPbind and LID, which undergo movements during catalysis. The LID domain closes over the site of phosphoryl transfer upon ATP binding. Assembling and dissambling the active center during each catalytic cycle provides an effective means to prevent ATP hydrolysis.</text>
</comment>
<comment type="similarity">
    <text evidence="1">Belongs to the adenylate kinase family.</text>
</comment>
<evidence type="ECO:0000255" key="1">
    <source>
        <dbReference type="HAMAP-Rule" id="MF_00235"/>
    </source>
</evidence>
<dbReference type="EC" id="2.7.4.3" evidence="1"/>
<dbReference type="EMBL" id="CP000139">
    <property type="protein sequence ID" value="ABR39363.1"/>
    <property type="molecule type" value="Genomic_DNA"/>
</dbReference>
<dbReference type="RefSeq" id="WP_005839600.1">
    <property type="nucleotide sequence ID" value="NZ_JANSWM010000064.1"/>
</dbReference>
<dbReference type="SMR" id="A6L0Z9"/>
<dbReference type="STRING" id="435590.BVU_1682"/>
<dbReference type="PaxDb" id="435590-BVU_1682"/>
<dbReference type="GeneID" id="5302648"/>
<dbReference type="KEGG" id="bvu:BVU_1682"/>
<dbReference type="eggNOG" id="COG0563">
    <property type="taxonomic scope" value="Bacteria"/>
</dbReference>
<dbReference type="HOGENOM" id="CLU_032354_4_1_10"/>
<dbReference type="BioCyc" id="BVUL435590:G1G59-1768-MONOMER"/>
<dbReference type="UniPathway" id="UPA00588">
    <property type="reaction ID" value="UER00649"/>
</dbReference>
<dbReference type="Proteomes" id="UP000002861">
    <property type="component" value="Chromosome"/>
</dbReference>
<dbReference type="GO" id="GO:0005737">
    <property type="term" value="C:cytoplasm"/>
    <property type="evidence" value="ECO:0007669"/>
    <property type="project" value="UniProtKB-SubCell"/>
</dbReference>
<dbReference type="GO" id="GO:0004017">
    <property type="term" value="F:adenylate kinase activity"/>
    <property type="evidence" value="ECO:0007669"/>
    <property type="project" value="UniProtKB-UniRule"/>
</dbReference>
<dbReference type="GO" id="GO:0005524">
    <property type="term" value="F:ATP binding"/>
    <property type="evidence" value="ECO:0007669"/>
    <property type="project" value="UniProtKB-UniRule"/>
</dbReference>
<dbReference type="GO" id="GO:0044209">
    <property type="term" value="P:AMP salvage"/>
    <property type="evidence" value="ECO:0007669"/>
    <property type="project" value="UniProtKB-UniRule"/>
</dbReference>
<dbReference type="CDD" id="cd01428">
    <property type="entry name" value="ADK"/>
    <property type="match status" value="1"/>
</dbReference>
<dbReference type="Gene3D" id="3.40.50.300">
    <property type="entry name" value="P-loop containing nucleotide triphosphate hydrolases"/>
    <property type="match status" value="1"/>
</dbReference>
<dbReference type="HAMAP" id="MF_00235">
    <property type="entry name" value="Adenylate_kinase_Adk"/>
    <property type="match status" value="1"/>
</dbReference>
<dbReference type="InterPro" id="IPR006259">
    <property type="entry name" value="Adenyl_kin_sub"/>
</dbReference>
<dbReference type="InterPro" id="IPR000850">
    <property type="entry name" value="Adenylat/UMP-CMP_kin"/>
</dbReference>
<dbReference type="InterPro" id="IPR033690">
    <property type="entry name" value="Adenylat_kinase_CS"/>
</dbReference>
<dbReference type="InterPro" id="IPR027417">
    <property type="entry name" value="P-loop_NTPase"/>
</dbReference>
<dbReference type="NCBIfam" id="TIGR01351">
    <property type="entry name" value="adk"/>
    <property type="match status" value="1"/>
</dbReference>
<dbReference type="NCBIfam" id="NF001381">
    <property type="entry name" value="PRK00279.1-3"/>
    <property type="match status" value="1"/>
</dbReference>
<dbReference type="NCBIfam" id="NF011100">
    <property type="entry name" value="PRK14527.1"/>
    <property type="match status" value="1"/>
</dbReference>
<dbReference type="NCBIfam" id="NF011104">
    <property type="entry name" value="PRK14531.1"/>
    <property type="match status" value="1"/>
</dbReference>
<dbReference type="NCBIfam" id="NF011105">
    <property type="entry name" value="PRK14532.1"/>
    <property type="match status" value="1"/>
</dbReference>
<dbReference type="PANTHER" id="PTHR23359">
    <property type="entry name" value="NUCLEOTIDE KINASE"/>
    <property type="match status" value="1"/>
</dbReference>
<dbReference type="Pfam" id="PF00406">
    <property type="entry name" value="ADK"/>
    <property type="match status" value="1"/>
</dbReference>
<dbReference type="PRINTS" id="PR00094">
    <property type="entry name" value="ADENYLTKNASE"/>
</dbReference>
<dbReference type="SUPFAM" id="SSF52540">
    <property type="entry name" value="P-loop containing nucleoside triphosphate hydrolases"/>
    <property type="match status" value="1"/>
</dbReference>
<dbReference type="PROSITE" id="PS00113">
    <property type="entry name" value="ADENYLATE_KINASE"/>
    <property type="match status" value="1"/>
</dbReference>